<evidence type="ECO:0000255" key="1">
    <source>
        <dbReference type="HAMAP-Rule" id="MF_00096"/>
    </source>
</evidence>
<gene>
    <name evidence="1" type="primary">mutS</name>
    <name type="ordered locus">LEUM_1576</name>
</gene>
<proteinExistence type="inferred from homology"/>
<accession>Q03VV4</accession>
<comment type="function">
    <text evidence="1">This protein is involved in the repair of mismatches in DNA. It is possible that it carries out the mismatch recognition step. This protein has a weak ATPase activity.</text>
</comment>
<comment type="similarity">
    <text evidence="1">Belongs to the DNA mismatch repair MutS family.</text>
</comment>
<protein>
    <recommendedName>
        <fullName evidence="1">DNA mismatch repair protein MutS</fullName>
    </recommendedName>
</protein>
<organism>
    <name type="scientific">Leuconostoc mesenteroides subsp. mesenteroides (strain ATCC 8293 / DSM 20343 / BCRC 11652 / CCM 1803 / JCM 6124 / NCDO 523 / NBRC 100496 / NCIMB 8023 / NCTC 12954 / NRRL B-1118 / 37Y)</name>
    <dbReference type="NCBI Taxonomy" id="203120"/>
    <lineage>
        <taxon>Bacteria</taxon>
        <taxon>Bacillati</taxon>
        <taxon>Bacillota</taxon>
        <taxon>Bacilli</taxon>
        <taxon>Lactobacillales</taxon>
        <taxon>Lactobacillaceae</taxon>
        <taxon>Leuconostoc</taxon>
    </lineage>
</organism>
<keyword id="KW-0067">ATP-binding</keyword>
<keyword id="KW-0227">DNA damage</keyword>
<keyword id="KW-0234">DNA repair</keyword>
<keyword id="KW-0238">DNA-binding</keyword>
<keyword id="KW-0547">Nucleotide-binding</keyword>
<keyword id="KW-1185">Reference proteome</keyword>
<reference key="1">
    <citation type="journal article" date="2006" name="Proc. Natl. Acad. Sci. U.S.A.">
        <title>Comparative genomics of the lactic acid bacteria.</title>
        <authorList>
            <person name="Makarova K.S."/>
            <person name="Slesarev A."/>
            <person name="Wolf Y.I."/>
            <person name="Sorokin A."/>
            <person name="Mirkin B."/>
            <person name="Koonin E.V."/>
            <person name="Pavlov A."/>
            <person name="Pavlova N."/>
            <person name="Karamychev V."/>
            <person name="Polouchine N."/>
            <person name="Shakhova V."/>
            <person name="Grigoriev I."/>
            <person name="Lou Y."/>
            <person name="Rohksar D."/>
            <person name="Lucas S."/>
            <person name="Huang K."/>
            <person name="Goodstein D.M."/>
            <person name="Hawkins T."/>
            <person name="Plengvidhya V."/>
            <person name="Welker D."/>
            <person name="Hughes J."/>
            <person name="Goh Y."/>
            <person name="Benson A."/>
            <person name="Baldwin K."/>
            <person name="Lee J.-H."/>
            <person name="Diaz-Muniz I."/>
            <person name="Dosti B."/>
            <person name="Smeianov V."/>
            <person name="Wechter W."/>
            <person name="Barabote R."/>
            <person name="Lorca G."/>
            <person name="Altermann E."/>
            <person name="Barrangou R."/>
            <person name="Ganesan B."/>
            <person name="Xie Y."/>
            <person name="Rawsthorne H."/>
            <person name="Tamir D."/>
            <person name="Parker C."/>
            <person name="Breidt F."/>
            <person name="Broadbent J.R."/>
            <person name="Hutkins R."/>
            <person name="O'Sullivan D."/>
            <person name="Steele J."/>
            <person name="Unlu G."/>
            <person name="Saier M.H. Jr."/>
            <person name="Klaenhammer T."/>
            <person name="Richardson P."/>
            <person name="Kozyavkin S."/>
            <person name="Weimer B.C."/>
            <person name="Mills D.A."/>
        </authorList>
    </citation>
    <scope>NUCLEOTIDE SEQUENCE [LARGE SCALE GENOMIC DNA]</scope>
    <source>
        <strain>ATCC 8293 / DSM 20343 / BCRC 11652 / CCM 1803 / JCM 6124 / NCDO 523 / NBRC 100496 / NCIMB 8023 / NCTC 12954 / NRRL B-1118 / 37Y</strain>
    </source>
</reference>
<feature type="chain" id="PRO_1000008073" description="DNA mismatch repair protein MutS">
    <location>
        <begin position="1"/>
        <end position="854"/>
    </location>
</feature>
<feature type="binding site" evidence="1">
    <location>
        <begin position="608"/>
        <end position="615"/>
    </location>
    <ligand>
        <name>ATP</name>
        <dbReference type="ChEBI" id="CHEBI:30616"/>
    </ligand>
</feature>
<sequence length="854" mass="95355">MAKVAETPMMVQYHEIKSQYPDAFVFYRLGDFYELFEDDAVLGAKLLELTLTARNKNSENPVPMAGIPHHAAQNYIDILVDQGHKVAIVEQMEDPATAKGMVKRDVVQLITPGTKLNSGMGNDKQNNYLAAVLPRDNRYFLSYIDLSTGELKTTTLKRFSDVIDELSSLEVKEIVLLKDDETTELGIANKLAERGLVISTQSDVNVNATVSFLTQPLVHENEAQVTTILLNYIFDTQRRNLDHIIPAQNYERLAYLKFNQDTRTNLDLVKNARTKKKAGSLLGLIDETKTAMGGRLLKQWLLRPLRDTEDINERLDVIEAFQNEFFVRGALQDHLKSVYDLERLAARAAMGTMNARELVQLKRSLSAIPGMKSVLSSSQGILNHASQRLEDMSDLAGLIDEAIVDDPPISIREGDIINDGFDSKIDEYRNVLSQNQKWLAQLESDERAATGINSLKVKYNKNFGFFIEVSRANVSKLEEGRYERKQTLTNAERFVTPELKEHERLINEAQLKRTEREYELFITIRERVKANISRLQKLARQVAQLDVLASLADVADNNRFVRPTFTDDNIINIKQGRHPVVEAILEAGEFVANDVNLDQNTAMQLITGPNMAGKSTYMRELALIVILGQMGSFVPAESAVLPIFDQIFTRIGANDDMAMGQSTFMVEMAEANLALQEASAHSLILFDELGRGTATYDGMALAQAIIEYLDAHVHAKTLFSTHYHELTALADKHENIKNVHVGAVEDESGELHFLHQIQQGPADKSYGIHVAALAGLPDELIANATTILSGLENQEALVPEPKASGLSEQVALFNVSDVDPKTETLFQKLDSINISTMTPLEALNVLAELQKLRK</sequence>
<name>MUTS_LEUMM</name>
<dbReference type="EMBL" id="CP000414">
    <property type="protein sequence ID" value="ABJ62668.1"/>
    <property type="molecule type" value="Genomic_DNA"/>
</dbReference>
<dbReference type="RefSeq" id="WP_011680235.1">
    <property type="nucleotide sequence ID" value="NC_008531.1"/>
</dbReference>
<dbReference type="SMR" id="Q03VV4"/>
<dbReference type="EnsemblBacteria" id="ABJ62668">
    <property type="protein sequence ID" value="ABJ62668"/>
    <property type="gene ID" value="LEUM_1576"/>
</dbReference>
<dbReference type="GeneID" id="29577110"/>
<dbReference type="KEGG" id="lme:LEUM_1576"/>
<dbReference type="eggNOG" id="COG0249">
    <property type="taxonomic scope" value="Bacteria"/>
</dbReference>
<dbReference type="HOGENOM" id="CLU_002472_4_0_9"/>
<dbReference type="Proteomes" id="UP000000362">
    <property type="component" value="Chromosome"/>
</dbReference>
<dbReference type="GO" id="GO:0005829">
    <property type="term" value="C:cytosol"/>
    <property type="evidence" value="ECO:0007669"/>
    <property type="project" value="TreeGrafter"/>
</dbReference>
<dbReference type="GO" id="GO:0005524">
    <property type="term" value="F:ATP binding"/>
    <property type="evidence" value="ECO:0007669"/>
    <property type="project" value="UniProtKB-UniRule"/>
</dbReference>
<dbReference type="GO" id="GO:0140664">
    <property type="term" value="F:ATP-dependent DNA damage sensor activity"/>
    <property type="evidence" value="ECO:0007669"/>
    <property type="project" value="InterPro"/>
</dbReference>
<dbReference type="GO" id="GO:0003684">
    <property type="term" value="F:damaged DNA binding"/>
    <property type="evidence" value="ECO:0007669"/>
    <property type="project" value="UniProtKB-UniRule"/>
</dbReference>
<dbReference type="GO" id="GO:0030983">
    <property type="term" value="F:mismatched DNA binding"/>
    <property type="evidence" value="ECO:0007669"/>
    <property type="project" value="InterPro"/>
</dbReference>
<dbReference type="GO" id="GO:0006298">
    <property type="term" value="P:mismatch repair"/>
    <property type="evidence" value="ECO:0007669"/>
    <property type="project" value="UniProtKB-UniRule"/>
</dbReference>
<dbReference type="CDD" id="cd03284">
    <property type="entry name" value="ABC_MutS1"/>
    <property type="match status" value="1"/>
</dbReference>
<dbReference type="FunFam" id="1.10.1420.10:FF:000001">
    <property type="entry name" value="DNA mismatch repair protein MutS"/>
    <property type="match status" value="1"/>
</dbReference>
<dbReference type="FunFam" id="3.40.1170.10:FF:000001">
    <property type="entry name" value="DNA mismatch repair protein MutS"/>
    <property type="match status" value="1"/>
</dbReference>
<dbReference type="FunFam" id="3.40.50.300:FF:000870">
    <property type="entry name" value="MutS protein homolog 4"/>
    <property type="match status" value="1"/>
</dbReference>
<dbReference type="Gene3D" id="1.10.1420.10">
    <property type="match status" value="2"/>
</dbReference>
<dbReference type="Gene3D" id="3.40.1170.10">
    <property type="entry name" value="DNA repair protein MutS, domain I"/>
    <property type="match status" value="1"/>
</dbReference>
<dbReference type="Gene3D" id="3.30.420.110">
    <property type="entry name" value="MutS, connector domain"/>
    <property type="match status" value="1"/>
</dbReference>
<dbReference type="Gene3D" id="3.40.50.300">
    <property type="entry name" value="P-loop containing nucleotide triphosphate hydrolases"/>
    <property type="match status" value="1"/>
</dbReference>
<dbReference type="HAMAP" id="MF_00096">
    <property type="entry name" value="MutS"/>
    <property type="match status" value="1"/>
</dbReference>
<dbReference type="InterPro" id="IPR005748">
    <property type="entry name" value="DNA_mismatch_repair_MutS"/>
</dbReference>
<dbReference type="InterPro" id="IPR007695">
    <property type="entry name" value="DNA_mismatch_repair_MutS-lik_N"/>
</dbReference>
<dbReference type="InterPro" id="IPR017261">
    <property type="entry name" value="DNA_mismatch_repair_MutS/MSH"/>
</dbReference>
<dbReference type="InterPro" id="IPR000432">
    <property type="entry name" value="DNA_mismatch_repair_MutS_C"/>
</dbReference>
<dbReference type="InterPro" id="IPR007861">
    <property type="entry name" value="DNA_mismatch_repair_MutS_clamp"/>
</dbReference>
<dbReference type="InterPro" id="IPR007696">
    <property type="entry name" value="DNA_mismatch_repair_MutS_core"/>
</dbReference>
<dbReference type="InterPro" id="IPR016151">
    <property type="entry name" value="DNA_mismatch_repair_MutS_N"/>
</dbReference>
<dbReference type="InterPro" id="IPR036187">
    <property type="entry name" value="DNA_mismatch_repair_MutS_sf"/>
</dbReference>
<dbReference type="InterPro" id="IPR007860">
    <property type="entry name" value="DNA_mmatch_repair_MutS_con_dom"/>
</dbReference>
<dbReference type="InterPro" id="IPR045076">
    <property type="entry name" value="MutS"/>
</dbReference>
<dbReference type="InterPro" id="IPR036678">
    <property type="entry name" value="MutS_con_dom_sf"/>
</dbReference>
<dbReference type="InterPro" id="IPR027417">
    <property type="entry name" value="P-loop_NTPase"/>
</dbReference>
<dbReference type="NCBIfam" id="TIGR01070">
    <property type="entry name" value="mutS1"/>
    <property type="match status" value="1"/>
</dbReference>
<dbReference type="NCBIfam" id="NF003810">
    <property type="entry name" value="PRK05399.1"/>
    <property type="match status" value="1"/>
</dbReference>
<dbReference type="PANTHER" id="PTHR11361:SF34">
    <property type="entry name" value="DNA MISMATCH REPAIR PROTEIN MSH1, MITOCHONDRIAL"/>
    <property type="match status" value="1"/>
</dbReference>
<dbReference type="PANTHER" id="PTHR11361">
    <property type="entry name" value="DNA MISMATCH REPAIR PROTEIN MUTS FAMILY MEMBER"/>
    <property type="match status" value="1"/>
</dbReference>
<dbReference type="Pfam" id="PF01624">
    <property type="entry name" value="MutS_I"/>
    <property type="match status" value="1"/>
</dbReference>
<dbReference type="Pfam" id="PF05188">
    <property type="entry name" value="MutS_II"/>
    <property type="match status" value="1"/>
</dbReference>
<dbReference type="Pfam" id="PF05192">
    <property type="entry name" value="MutS_III"/>
    <property type="match status" value="1"/>
</dbReference>
<dbReference type="Pfam" id="PF05190">
    <property type="entry name" value="MutS_IV"/>
    <property type="match status" value="1"/>
</dbReference>
<dbReference type="Pfam" id="PF00488">
    <property type="entry name" value="MutS_V"/>
    <property type="match status" value="1"/>
</dbReference>
<dbReference type="PIRSF" id="PIRSF037677">
    <property type="entry name" value="DNA_mis_repair_Msh6"/>
    <property type="match status" value="1"/>
</dbReference>
<dbReference type="SMART" id="SM00534">
    <property type="entry name" value="MUTSac"/>
    <property type="match status" value="1"/>
</dbReference>
<dbReference type="SMART" id="SM00533">
    <property type="entry name" value="MUTSd"/>
    <property type="match status" value="1"/>
</dbReference>
<dbReference type="SUPFAM" id="SSF55271">
    <property type="entry name" value="DNA repair protein MutS, domain I"/>
    <property type="match status" value="1"/>
</dbReference>
<dbReference type="SUPFAM" id="SSF53150">
    <property type="entry name" value="DNA repair protein MutS, domain II"/>
    <property type="match status" value="1"/>
</dbReference>
<dbReference type="SUPFAM" id="SSF48334">
    <property type="entry name" value="DNA repair protein MutS, domain III"/>
    <property type="match status" value="1"/>
</dbReference>
<dbReference type="SUPFAM" id="SSF52540">
    <property type="entry name" value="P-loop containing nucleoside triphosphate hydrolases"/>
    <property type="match status" value="1"/>
</dbReference>
<dbReference type="PROSITE" id="PS00486">
    <property type="entry name" value="DNA_MISMATCH_REPAIR_2"/>
    <property type="match status" value="1"/>
</dbReference>